<keyword id="KW-0963">Cytoplasm</keyword>
<keyword id="KW-0342">GTP-binding</keyword>
<keyword id="KW-0436">Ligase</keyword>
<keyword id="KW-0460">Magnesium</keyword>
<keyword id="KW-0479">Metal-binding</keyword>
<keyword id="KW-0547">Nucleotide-binding</keyword>
<keyword id="KW-0658">Purine biosynthesis</keyword>
<evidence type="ECO:0000255" key="1">
    <source>
        <dbReference type="HAMAP-Rule" id="MF_00011"/>
    </source>
</evidence>
<protein>
    <recommendedName>
        <fullName evidence="1">Adenylosuccinate synthetase</fullName>
        <shortName evidence="1">AMPSase</shortName>
        <shortName evidence="1">AdSS</shortName>
        <ecNumber evidence="1">6.3.4.4</ecNumber>
    </recommendedName>
    <alternativeName>
        <fullName evidence="1">IMP--aspartate ligase</fullName>
    </alternativeName>
</protein>
<proteinExistence type="inferred from homology"/>
<comment type="function">
    <text evidence="1">Plays an important role in the de novo pathway of purine nucleotide biosynthesis. Catalyzes the first committed step in the biosynthesis of AMP from IMP.</text>
</comment>
<comment type="catalytic activity">
    <reaction evidence="1">
        <text>IMP + L-aspartate + GTP = N(6)-(1,2-dicarboxyethyl)-AMP + GDP + phosphate + 2 H(+)</text>
        <dbReference type="Rhea" id="RHEA:15753"/>
        <dbReference type="ChEBI" id="CHEBI:15378"/>
        <dbReference type="ChEBI" id="CHEBI:29991"/>
        <dbReference type="ChEBI" id="CHEBI:37565"/>
        <dbReference type="ChEBI" id="CHEBI:43474"/>
        <dbReference type="ChEBI" id="CHEBI:57567"/>
        <dbReference type="ChEBI" id="CHEBI:58053"/>
        <dbReference type="ChEBI" id="CHEBI:58189"/>
        <dbReference type="EC" id="6.3.4.4"/>
    </reaction>
</comment>
<comment type="cofactor">
    <cofactor evidence="1">
        <name>Mg(2+)</name>
        <dbReference type="ChEBI" id="CHEBI:18420"/>
    </cofactor>
    <text evidence="1">Binds 1 Mg(2+) ion per subunit.</text>
</comment>
<comment type="pathway">
    <text evidence="1">Purine metabolism; AMP biosynthesis via de novo pathway; AMP from IMP: step 1/2.</text>
</comment>
<comment type="subunit">
    <text evidence="1">Homodimer.</text>
</comment>
<comment type="subcellular location">
    <subcellularLocation>
        <location evidence="1">Cytoplasm</location>
    </subcellularLocation>
</comment>
<comment type="similarity">
    <text evidence="1">Belongs to the adenylosuccinate synthetase family.</text>
</comment>
<accession>A1JIS0</accession>
<dbReference type="EC" id="6.3.4.4" evidence="1"/>
<dbReference type="EMBL" id="AM286415">
    <property type="protein sequence ID" value="CAL10511.1"/>
    <property type="molecule type" value="Genomic_DNA"/>
</dbReference>
<dbReference type="RefSeq" id="WP_005175500.1">
    <property type="nucleotide sequence ID" value="NC_008800.1"/>
</dbReference>
<dbReference type="RefSeq" id="YP_001004757.1">
    <property type="nucleotide sequence ID" value="NC_008800.1"/>
</dbReference>
<dbReference type="SMR" id="A1JIS0"/>
<dbReference type="KEGG" id="yen:YE0382"/>
<dbReference type="PATRIC" id="fig|393305.7.peg.478"/>
<dbReference type="eggNOG" id="COG0104">
    <property type="taxonomic scope" value="Bacteria"/>
</dbReference>
<dbReference type="HOGENOM" id="CLU_029848_0_0_6"/>
<dbReference type="OrthoDB" id="9807553at2"/>
<dbReference type="UniPathway" id="UPA00075">
    <property type="reaction ID" value="UER00335"/>
</dbReference>
<dbReference type="Proteomes" id="UP000000642">
    <property type="component" value="Chromosome"/>
</dbReference>
<dbReference type="GO" id="GO:0005737">
    <property type="term" value="C:cytoplasm"/>
    <property type="evidence" value="ECO:0007669"/>
    <property type="project" value="UniProtKB-SubCell"/>
</dbReference>
<dbReference type="GO" id="GO:0004019">
    <property type="term" value="F:adenylosuccinate synthase activity"/>
    <property type="evidence" value="ECO:0007669"/>
    <property type="project" value="UniProtKB-UniRule"/>
</dbReference>
<dbReference type="GO" id="GO:0005525">
    <property type="term" value="F:GTP binding"/>
    <property type="evidence" value="ECO:0007669"/>
    <property type="project" value="UniProtKB-UniRule"/>
</dbReference>
<dbReference type="GO" id="GO:0000287">
    <property type="term" value="F:magnesium ion binding"/>
    <property type="evidence" value="ECO:0007669"/>
    <property type="project" value="UniProtKB-UniRule"/>
</dbReference>
<dbReference type="GO" id="GO:0044208">
    <property type="term" value="P:'de novo' AMP biosynthetic process"/>
    <property type="evidence" value="ECO:0007669"/>
    <property type="project" value="UniProtKB-UniRule"/>
</dbReference>
<dbReference type="GO" id="GO:0046040">
    <property type="term" value="P:IMP metabolic process"/>
    <property type="evidence" value="ECO:0007669"/>
    <property type="project" value="TreeGrafter"/>
</dbReference>
<dbReference type="CDD" id="cd03108">
    <property type="entry name" value="AdSS"/>
    <property type="match status" value="1"/>
</dbReference>
<dbReference type="FunFam" id="1.10.300.10:FF:000001">
    <property type="entry name" value="Adenylosuccinate synthetase"/>
    <property type="match status" value="1"/>
</dbReference>
<dbReference type="FunFam" id="3.90.170.10:FF:000001">
    <property type="entry name" value="Adenylosuccinate synthetase"/>
    <property type="match status" value="1"/>
</dbReference>
<dbReference type="Gene3D" id="3.40.440.10">
    <property type="entry name" value="Adenylosuccinate Synthetase, subunit A, domain 1"/>
    <property type="match status" value="1"/>
</dbReference>
<dbReference type="Gene3D" id="1.10.300.10">
    <property type="entry name" value="Adenylosuccinate Synthetase, subunit A, domain 2"/>
    <property type="match status" value="1"/>
</dbReference>
<dbReference type="Gene3D" id="3.90.170.10">
    <property type="entry name" value="Adenylosuccinate Synthetase, subunit A, domain 3"/>
    <property type="match status" value="1"/>
</dbReference>
<dbReference type="HAMAP" id="MF_00011">
    <property type="entry name" value="Adenylosucc_synth"/>
    <property type="match status" value="1"/>
</dbReference>
<dbReference type="InterPro" id="IPR018220">
    <property type="entry name" value="Adenylosuccin_syn_GTP-bd"/>
</dbReference>
<dbReference type="InterPro" id="IPR033128">
    <property type="entry name" value="Adenylosuccin_syn_Lys_AS"/>
</dbReference>
<dbReference type="InterPro" id="IPR042109">
    <property type="entry name" value="Adenylosuccinate_synth_dom1"/>
</dbReference>
<dbReference type="InterPro" id="IPR042110">
    <property type="entry name" value="Adenylosuccinate_synth_dom2"/>
</dbReference>
<dbReference type="InterPro" id="IPR042111">
    <property type="entry name" value="Adenylosuccinate_synth_dom3"/>
</dbReference>
<dbReference type="InterPro" id="IPR001114">
    <property type="entry name" value="Adenylosuccinate_synthetase"/>
</dbReference>
<dbReference type="InterPro" id="IPR027417">
    <property type="entry name" value="P-loop_NTPase"/>
</dbReference>
<dbReference type="NCBIfam" id="NF002223">
    <property type="entry name" value="PRK01117.1"/>
    <property type="match status" value="1"/>
</dbReference>
<dbReference type="NCBIfam" id="TIGR00184">
    <property type="entry name" value="purA"/>
    <property type="match status" value="1"/>
</dbReference>
<dbReference type="PANTHER" id="PTHR11846">
    <property type="entry name" value="ADENYLOSUCCINATE SYNTHETASE"/>
    <property type="match status" value="1"/>
</dbReference>
<dbReference type="PANTHER" id="PTHR11846:SF0">
    <property type="entry name" value="ADENYLOSUCCINATE SYNTHETASE"/>
    <property type="match status" value="1"/>
</dbReference>
<dbReference type="Pfam" id="PF00709">
    <property type="entry name" value="Adenylsucc_synt"/>
    <property type="match status" value="1"/>
</dbReference>
<dbReference type="SMART" id="SM00788">
    <property type="entry name" value="Adenylsucc_synt"/>
    <property type="match status" value="1"/>
</dbReference>
<dbReference type="SUPFAM" id="SSF52540">
    <property type="entry name" value="P-loop containing nucleoside triphosphate hydrolases"/>
    <property type="match status" value="1"/>
</dbReference>
<dbReference type="PROSITE" id="PS01266">
    <property type="entry name" value="ADENYLOSUCCIN_SYN_1"/>
    <property type="match status" value="1"/>
</dbReference>
<dbReference type="PROSITE" id="PS00513">
    <property type="entry name" value="ADENYLOSUCCIN_SYN_2"/>
    <property type="match status" value="1"/>
</dbReference>
<organism>
    <name type="scientific">Yersinia enterocolitica serotype O:8 / biotype 1B (strain NCTC 13174 / 8081)</name>
    <dbReference type="NCBI Taxonomy" id="393305"/>
    <lineage>
        <taxon>Bacteria</taxon>
        <taxon>Pseudomonadati</taxon>
        <taxon>Pseudomonadota</taxon>
        <taxon>Gammaproteobacteria</taxon>
        <taxon>Enterobacterales</taxon>
        <taxon>Yersiniaceae</taxon>
        <taxon>Yersinia</taxon>
    </lineage>
</organism>
<feature type="chain" id="PRO_1000000946" description="Adenylosuccinate synthetase">
    <location>
        <begin position="1"/>
        <end position="432"/>
    </location>
</feature>
<feature type="active site" description="Proton acceptor" evidence="1">
    <location>
        <position position="14"/>
    </location>
</feature>
<feature type="active site" description="Proton donor" evidence="1">
    <location>
        <position position="42"/>
    </location>
</feature>
<feature type="binding site" evidence="1">
    <location>
        <begin position="13"/>
        <end position="19"/>
    </location>
    <ligand>
        <name>GTP</name>
        <dbReference type="ChEBI" id="CHEBI:37565"/>
    </ligand>
</feature>
<feature type="binding site" description="in other chain" evidence="1">
    <location>
        <begin position="14"/>
        <end position="17"/>
    </location>
    <ligand>
        <name>IMP</name>
        <dbReference type="ChEBI" id="CHEBI:58053"/>
        <note>ligand shared between dimeric partners</note>
    </ligand>
</feature>
<feature type="binding site" evidence="1">
    <location>
        <position position="14"/>
    </location>
    <ligand>
        <name>Mg(2+)</name>
        <dbReference type="ChEBI" id="CHEBI:18420"/>
    </ligand>
</feature>
<feature type="binding site" description="in other chain" evidence="1">
    <location>
        <begin position="39"/>
        <end position="42"/>
    </location>
    <ligand>
        <name>IMP</name>
        <dbReference type="ChEBI" id="CHEBI:58053"/>
        <note>ligand shared between dimeric partners</note>
    </ligand>
</feature>
<feature type="binding site" evidence="1">
    <location>
        <begin position="41"/>
        <end position="43"/>
    </location>
    <ligand>
        <name>GTP</name>
        <dbReference type="ChEBI" id="CHEBI:37565"/>
    </ligand>
</feature>
<feature type="binding site" evidence="1">
    <location>
        <position position="41"/>
    </location>
    <ligand>
        <name>Mg(2+)</name>
        <dbReference type="ChEBI" id="CHEBI:18420"/>
    </ligand>
</feature>
<feature type="binding site" description="in other chain" evidence="1">
    <location>
        <position position="130"/>
    </location>
    <ligand>
        <name>IMP</name>
        <dbReference type="ChEBI" id="CHEBI:58053"/>
        <note>ligand shared between dimeric partners</note>
    </ligand>
</feature>
<feature type="binding site" evidence="1">
    <location>
        <position position="144"/>
    </location>
    <ligand>
        <name>IMP</name>
        <dbReference type="ChEBI" id="CHEBI:58053"/>
        <note>ligand shared between dimeric partners</note>
    </ligand>
</feature>
<feature type="binding site" description="in other chain" evidence="1">
    <location>
        <position position="225"/>
    </location>
    <ligand>
        <name>IMP</name>
        <dbReference type="ChEBI" id="CHEBI:58053"/>
        <note>ligand shared between dimeric partners</note>
    </ligand>
</feature>
<feature type="binding site" description="in other chain" evidence="1">
    <location>
        <position position="240"/>
    </location>
    <ligand>
        <name>IMP</name>
        <dbReference type="ChEBI" id="CHEBI:58053"/>
        <note>ligand shared between dimeric partners</note>
    </ligand>
</feature>
<feature type="binding site" evidence="1">
    <location>
        <begin position="300"/>
        <end position="306"/>
    </location>
    <ligand>
        <name>substrate</name>
    </ligand>
</feature>
<feature type="binding site" description="in other chain" evidence="1">
    <location>
        <position position="304"/>
    </location>
    <ligand>
        <name>IMP</name>
        <dbReference type="ChEBI" id="CHEBI:58053"/>
        <note>ligand shared between dimeric partners</note>
    </ligand>
</feature>
<feature type="binding site" evidence="1">
    <location>
        <position position="306"/>
    </location>
    <ligand>
        <name>GTP</name>
        <dbReference type="ChEBI" id="CHEBI:37565"/>
    </ligand>
</feature>
<feature type="binding site" evidence="1">
    <location>
        <begin position="332"/>
        <end position="334"/>
    </location>
    <ligand>
        <name>GTP</name>
        <dbReference type="ChEBI" id="CHEBI:37565"/>
    </ligand>
</feature>
<feature type="binding site" evidence="1">
    <location>
        <begin position="415"/>
        <end position="417"/>
    </location>
    <ligand>
        <name>GTP</name>
        <dbReference type="ChEBI" id="CHEBI:37565"/>
    </ligand>
</feature>
<reference key="1">
    <citation type="journal article" date="2006" name="PLoS Genet.">
        <title>The complete genome sequence and comparative genome analysis of the high pathogenicity Yersinia enterocolitica strain 8081.</title>
        <authorList>
            <person name="Thomson N.R."/>
            <person name="Howard S."/>
            <person name="Wren B.W."/>
            <person name="Holden M.T.G."/>
            <person name="Crossman L."/>
            <person name="Challis G.L."/>
            <person name="Churcher C."/>
            <person name="Mungall K."/>
            <person name="Brooks K."/>
            <person name="Chillingworth T."/>
            <person name="Feltwell T."/>
            <person name="Abdellah Z."/>
            <person name="Hauser H."/>
            <person name="Jagels K."/>
            <person name="Maddison M."/>
            <person name="Moule S."/>
            <person name="Sanders M."/>
            <person name="Whitehead S."/>
            <person name="Quail M.A."/>
            <person name="Dougan G."/>
            <person name="Parkhill J."/>
            <person name="Prentice M.B."/>
        </authorList>
    </citation>
    <scope>NUCLEOTIDE SEQUENCE [LARGE SCALE GENOMIC DNA]</scope>
    <source>
        <strain>NCTC 13174 / 8081</strain>
    </source>
</reference>
<gene>
    <name evidence="1" type="primary">purA</name>
    <name type="ordered locus">YE0382</name>
</gene>
<sequence length="432" mass="47317">MGKNVVVLGTQWGDEGKGKVVDLLTERAKYVVRYQGGHNAGHTLVINGEKTVLHLIPSGILRENVTSIIGNGVVLAPDALMKEMTDLEARGVPVRERLLLSEACPLILPYHVALDNAREKARGAKAIGTTGRGIGPAYEDKVARRGLRVGDLFNKETFAIKLKEIVDYHNFQLVHYYKEEAVDYQKVLDEVLAIADILTAMVVDVSELLDSARKRGDFMMFEGAQGTLLDIDHGTYPYVTSSNTTAGGVATGSGLGPRYVDYVLGIVKAYSTRVGAGPFPTELNDETGEFLRKQGNEYGATTGRSRRTGWLDIVAVRRAVQINSLSGFCMTKLDVLDGLKEVKLCVGYRMPDGREVDTTPLAAEGWEGIEPIYETMPGWSEVTFGVKEHSKLPQAALNYIKRVEELTGVPVDIISTGPDREETMILRDPFDA</sequence>
<name>PURA_YERE8</name>